<reference key="1">
    <citation type="journal article" date="2004" name="PLoS Biol.">
        <title>Genomic insights into methanotrophy: the complete genome sequence of Methylococcus capsulatus (Bath).</title>
        <authorList>
            <person name="Ward N.L."/>
            <person name="Larsen O."/>
            <person name="Sakwa J."/>
            <person name="Bruseth L."/>
            <person name="Khouri H.M."/>
            <person name="Durkin A.S."/>
            <person name="Dimitrov G."/>
            <person name="Jiang L."/>
            <person name="Scanlan D."/>
            <person name="Kang K.H."/>
            <person name="Lewis M.R."/>
            <person name="Nelson K.E."/>
            <person name="Methe B.A."/>
            <person name="Wu M."/>
            <person name="Heidelberg J.F."/>
            <person name="Paulsen I.T."/>
            <person name="Fouts D.E."/>
            <person name="Ravel J."/>
            <person name="Tettelin H."/>
            <person name="Ren Q."/>
            <person name="Read T.D."/>
            <person name="DeBoy R.T."/>
            <person name="Seshadri R."/>
            <person name="Salzberg S.L."/>
            <person name="Jensen H.B."/>
            <person name="Birkeland N.K."/>
            <person name="Nelson W.C."/>
            <person name="Dodson R.J."/>
            <person name="Grindhaug S.H."/>
            <person name="Holt I.E."/>
            <person name="Eidhammer I."/>
            <person name="Jonasen I."/>
            <person name="Vanaken S."/>
            <person name="Utterback T.R."/>
            <person name="Feldblyum T.V."/>
            <person name="Fraser C.M."/>
            <person name="Lillehaug J.R."/>
            <person name="Eisen J.A."/>
        </authorList>
    </citation>
    <scope>NUCLEOTIDE SEQUENCE [LARGE SCALE GENOMIC DNA]</scope>
    <source>
        <strain>ATCC 33009 / NCIMB 11132 / Bath</strain>
    </source>
</reference>
<comment type="function">
    <text evidence="1">Catalyzes the phosphorylation of the 3'-hydroxyl group of dephosphocoenzyme A to form coenzyme A.</text>
</comment>
<comment type="catalytic activity">
    <reaction evidence="1">
        <text>3'-dephospho-CoA + ATP = ADP + CoA + H(+)</text>
        <dbReference type="Rhea" id="RHEA:18245"/>
        <dbReference type="ChEBI" id="CHEBI:15378"/>
        <dbReference type="ChEBI" id="CHEBI:30616"/>
        <dbReference type="ChEBI" id="CHEBI:57287"/>
        <dbReference type="ChEBI" id="CHEBI:57328"/>
        <dbReference type="ChEBI" id="CHEBI:456216"/>
        <dbReference type="EC" id="2.7.1.24"/>
    </reaction>
</comment>
<comment type="pathway">
    <text evidence="1">Cofactor biosynthesis; coenzyme A biosynthesis; CoA from (R)-pantothenate: step 5/5.</text>
</comment>
<comment type="subcellular location">
    <subcellularLocation>
        <location evidence="1">Cytoplasm</location>
    </subcellularLocation>
</comment>
<comment type="similarity">
    <text evidence="1">Belongs to the CoaE family.</text>
</comment>
<evidence type="ECO:0000255" key="1">
    <source>
        <dbReference type="HAMAP-Rule" id="MF_00376"/>
    </source>
</evidence>
<gene>
    <name evidence="1" type="primary">coaE</name>
    <name type="ordered locus">MCA2093</name>
</gene>
<organism>
    <name type="scientific">Methylococcus capsulatus (strain ATCC 33009 / NCIMB 11132 / Bath)</name>
    <dbReference type="NCBI Taxonomy" id="243233"/>
    <lineage>
        <taxon>Bacteria</taxon>
        <taxon>Pseudomonadati</taxon>
        <taxon>Pseudomonadota</taxon>
        <taxon>Gammaproteobacteria</taxon>
        <taxon>Methylococcales</taxon>
        <taxon>Methylococcaceae</taxon>
        <taxon>Methylococcus</taxon>
    </lineage>
</organism>
<name>COAE_METCA</name>
<keyword id="KW-0067">ATP-binding</keyword>
<keyword id="KW-0173">Coenzyme A biosynthesis</keyword>
<keyword id="KW-0963">Cytoplasm</keyword>
<keyword id="KW-0418">Kinase</keyword>
<keyword id="KW-0547">Nucleotide-binding</keyword>
<keyword id="KW-1185">Reference proteome</keyword>
<keyword id="KW-0808">Transferase</keyword>
<sequence>MLVVGLTGGIGAGKSTVARMFAARGVEVFEADEVAHRLLEPGQPALKAVARAFGSDILGADGRLDRAALRRRVFAESKARKRLEGIVHPLVYAELARLVLGAAGSYCVLSVPLLLETGRRRFVDRLLVVDCPESLQIERVVRRSGLRPEEVRAIMAAQVSRSERLAAADDVIVNAADTAGLEAEVDALHRRYSLLAAA</sequence>
<dbReference type="EC" id="2.7.1.24" evidence="1"/>
<dbReference type="EMBL" id="AE017282">
    <property type="protein sequence ID" value="AAU91915.1"/>
    <property type="molecule type" value="Genomic_DNA"/>
</dbReference>
<dbReference type="RefSeq" id="WP_010961336.1">
    <property type="nucleotide sequence ID" value="NC_002977.6"/>
</dbReference>
<dbReference type="SMR" id="Q606C5"/>
<dbReference type="STRING" id="243233.MCA2093"/>
<dbReference type="GeneID" id="88224316"/>
<dbReference type="KEGG" id="mca:MCA2093"/>
<dbReference type="eggNOG" id="COG0237">
    <property type="taxonomic scope" value="Bacteria"/>
</dbReference>
<dbReference type="HOGENOM" id="CLU_057180_1_2_6"/>
<dbReference type="UniPathway" id="UPA00241">
    <property type="reaction ID" value="UER00356"/>
</dbReference>
<dbReference type="Proteomes" id="UP000006821">
    <property type="component" value="Chromosome"/>
</dbReference>
<dbReference type="GO" id="GO:0005737">
    <property type="term" value="C:cytoplasm"/>
    <property type="evidence" value="ECO:0007669"/>
    <property type="project" value="UniProtKB-SubCell"/>
</dbReference>
<dbReference type="GO" id="GO:0005524">
    <property type="term" value="F:ATP binding"/>
    <property type="evidence" value="ECO:0007669"/>
    <property type="project" value="UniProtKB-UniRule"/>
</dbReference>
<dbReference type="GO" id="GO:0004140">
    <property type="term" value="F:dephospho-CoA kinase activity"/>
    <property type="evidence" value="ECO:0007669"/>
    <property type="project" value="UniProtKB-UniRule"/>
</dbReference>
<dbReference type="GO" id="GO:0015937">
    <property type="term" value="P:coenzyme A biosynthetic process"/>
    <property type="evidence" value="ECO:0007669"/>
    <property type="project" value="UniProtKB-UniRule"/>
</dbReference>
<dbReference type="CDD" id="cd02022">
    <property type="entry name" value="DPCK"/>
    <property type="match status" value="1"/>
</dbReference>
<dbReference type="Gene3D" id="3.40.50.300">
    <property type="entry name" value="P-loop containing nucleotide triphosphate hydrolases"/>
    <property type="match status" value="1"/>
</dbReference>
<dbReference type="HAMAP" id="MF_00376">
    <property type="entry name" value="Dephospho_CoA_kinase"/>
    <property type="match status" value="1"/>
</dbReference>
<dbReference type="InterPro" id="IPR001977">
    <property type="entry name" value="Depp_CoAkinase"/>
</dbReference>
<dbReference type="InterPro" id="IPR027417">
    <property type="entry name" value="P-loop_NTPase"/>
</dbReference>
<dbReference type="NCBIfam" id="TIGR00152">
    <property type="entry name" value="dephospho-CoA kinase"/>
    <property type="match status" value="1"/>
</dbReference>
<dbReference type="PANTHER" id="PTHR10695:SF46">
    <property type="entry name" value="BIFUNCTIONAL COENZYME A SYNTHASE-RELATED"/>
    <property type="match status" value="1"/>
</dbReference>
<dbReference type="PANTHER" id="PTHR10695">
    <property type="entry name" value="DEPHOSPHO-COA KINASE-RELATED"/>
    <property type="match status" value="1"/>
</dbReference>
<dbReference type="Pfam" id="PF01121">
    <property type="entry name" value="CoaE"/>
    <property type="match status" value="1"/>
</dbReference>
<dbReference type="SUPFAM" id="SSF52540">
    <property type="entry name" value="P-loop containing nucleoside triphosphate hydrolases"/>
    <property type="match status" value="1"/>
</dbReference>
<dbReference type="PROSITE" id="PS51219">
    <property type="entry name" value="DPCK"/>
    <property type="match status" value="1"/>
</dbReference>
<protein>
    <recommendedName>
        <fullName evidence="1">Dephospho-CoA kinase</fullName>
        <ecNumber evidence="1">2.7.1.24</ecNumber>
    </recommendedName>
    <alternativeName>
        <fullName evidence="1">Dephosphocoenzyme A kinase</fullName>
    </alternativeName>
</protein>
<feature type="chain" id="PRO_0000243305" description="Dephospho-CoA kinase">
    <location>
        <begin position="1"/>
        <end position="198"/>
    </location>
</feature>
<feature type="domain" description="DPCK" evidence="1">
    <location>
        <begin position="3"/>
        <end position="198"/>
    </location>
</feature>
<feature type="binding site" evidence="1">
    <location>
        <begin position="11"/>
        <end position="16"/>
    </location>
    <ligand>
        <name>ATP</name>
        <dbReference type="ChEBI" id="CHEBI:30616"/>
    </ligand>
</feature>
<proteinExistence type="inferred from homology"/>
<accession>Q606C5</accession>